<keyword id="KW-0004">4Fe-4S</keyword>
<keyword id="KW-0408">Iron</keyword>
<keyword id="KW-0411">Iron-sulfur</keyword>
<keyword id="KW-0414">Isoprene biosynthesis</keyword>
<keyword id="KW-0479">Metal-binding</keyword>
<keyword id="KW-0560">Oxidoreductase</keyword>
<protein>
    <recommendedName>
        <fullName evidence="1">4-hydroxy-3-methylbut-2-en-1-yl diphosphate synthase (flavodoxin)</fullName>
        <ecNumber evidence="1">1.17.7.3</ecNumber>
    </recommendedName>
    <alternativeName>
        <fullName evidence="1">1-hydroxy-2-methyl-2-(E)-butenyl 4-diphosphate synthase</fullName>
    </alternativeName>
</protein>
<evidence type="ECO:0000255" key="1">
    <source>
        <dbReference type="HAMAP-Rule" id="MF_00159"/>
    </source>
</evidence>
<comment type="function">
    <text evidence="1">Converts 2C-methyl-D-erythritol 2,4-cyclodiphosphate (ME-2,4cPP) into 1-hydroxy-2-methyl-2-(E)-butenyl 4-diphosphate.</text>
</comment>
<comment type="catalytic activity">
    <reaction evidence="1">
        <text>(2E)-4-hydroxy-3-methylbut-2-enyl diphosphate + oxidized [flavodoxin] + H2O + 2 H(+) = 2-C-methyl-D-erythritol 2,4-cyclic diphosphate + reduced [flavodoxin]</text>
        <dbReference type="Rhea" id="RHEA:43604"/>
        <dbReference type="Rhea" id="RHEA-COMP:10622"/>
        <dbReference type="Rhea" id="RHEA-COMP:10623"/>
        <dbReference type="ChEBI" id="CHEBI:15377"/>
        <dbReference type="ChEBI" id="CHEBI:15378"/>
        <dbReference type="ChEBI" id="CHEBI:57618"/>
        <dbReference type="ChEBI" id="CHEBI:58210"/>
        <dbReference type="ChEBI" id="CHEBI:58483"/>
        <dbReference type="ChEBI" id="CHEBI:128753"/>
        <dbReference type="EC" id="1.17.7.3"/>
    </reaction>
</comment>
<comment type="cofactor">
    <cofactor evidence="1">
        <name>[4Fe-4S] cluster</name>
        <dbReference type="ChEBI" id="CHEBI:49883"/>
    </cofactor>
    <text evidence="1">Binds 1 [4Fe-4S] cluster.</text>
</comment>
<comment type="pathway">
    <text evidence="1">Isoprenoid biosynthesis; isopentenyl diphosphate biosynthesis via DXP pathway; isopentenyl diphosphate from 1-deoxy-D-xylulose 5-phosphate: step 5/6.</text>
</comment>
<comment type="similarity">
    <text evidence="1">Belongs to the IspG family.</text>
</comment>
<accession>Q04UL2</accession>
<reference key="1">
    <citation type="journal article" date="2006" name="Proc. Natl. Acad. Sci. U.S.A.">
        <title>Genome reduction in Leptospira borgpetersenii reflects limited transmission potential.</title>
        <authorList>
            <person name="Bulach D.M."/>
            <person name="Zuerner R.L."/>
            <person name="Wilson P."/>
            <person name="Seemann T."/>
            <person name="McGrath A."/>
            <person name="Cullen P.A."/>
            <person name="Davis J."/>
            <person name="Johnson M."/>
            <person name="Kuczek E."/>
            <person name="Alt D.P."/>
            <person name="Peterson-Burch B."/>
            <person name="Coppel R.L."/>
            <person name="Rood J.I."/>
            <person name="Davies J.K."/>
            <person name="Adler B."/>
        </authorList>
    </citation>
    <scope>NUCLEOTIDE SEQUENCE [LARGE SCALE GENOMIC DNA]</scope>
    <source>
        <strain>JB197</strain>
    </source>
</reference>
<proteinExistence type="inferred from homology"/>
<organism>
    <name type="scientific">Leptospira borgpetersenii serovar Hardjo-bovis (strain JB197)</name>
    <dbReference type="NCBI Taxonomy" id="355277"/>
    <lineage>
        <taxon>Bacteria</taxon>
        <taxon>Pseudomonadati</taxon>
        <taxon>Spirochaetota</taxon>
        <taxon>Spirochaetia</taxon>
        <taxon>Leptospirales</taxon>
        <taxon>Leptospiraceae</taxon>
        <taxon>Leptospira</taxon>
    </lineage>
</organism>
<sequence length="663" mass="73987">MNFRYNHTPFGYKRRQTREVKVGDVKIGGNNPIVIQSMINSDTTDTKGTVKQILELERTGCEIVRFTVPSQVDADNLPSIRQELKKAGSKIPLVADIHFTPSVAMKAVEYVEKVRINPGNFADKKKFAVRDYTDSEYDEELERISATFSPLVLRCKELGVSMRIGTNHGSLSDRIMNRYGDTPQGMVESALEFIRIAESLNYYDIVVSMKASNPQVMVQAYRMLASRFNELKMDYPLHLGVTEAGDGKDGRIKSAIGIGSLLEDGLGDTIRVSLTEDPVLEIPVARLLAEKFNKRIVKPEPVRGYSEFRNPFTYERFYSSEIKVGTFEAGENHPVRVETVLPFENSNSFLANIAKLYQYGKSFSIEPESILIDSPSPDQLKEISEAAAALSIPVGILLGKNVSLNEKLQNELRGFPKVVFDPFLQFQDGKKMLSFLQERQNAGLYTEIHTSGAKIESFKGLPETLSEIGIKNVLFSIESKEILYDYRKLGSILSQHEFPILLHGSFSNPEEALYDSAIGIGGLLIDGIGDLIRIKTPKMKDIEEIFQLSYDLLQGTRLRLTKTEYISCPSCGRTLFNLQETTARIKSRTGHLKGVKIAVMGCIVNGPGEMADADFGYVGAGPGKVHLYRGKEIVMKNVPSEVADEKLVELIKKHGLWQDVTNV</sequence>
<name>ISPG_LEPBJ</name>
<gene>
    <name evidence="1" type="primary">ispG</name>
    <name type="ordered locus">LBJ_0737</name>
</gene>
<dbReference type="EC" id="1.17.7.3" evidence="1"/>
<dbReference type="EMBL" id="CP000350">
    <property type="protein sequence ID" value="ABJ75408.1"/>
    <property type="molecule type" value="Genomic_DNA"/>
</dbReference>
<dbReference type="RefSeq" id="WP_011671608.1">
    <property type="nucleotide sequence ID" value="NC_008510.1"/>
</dbReference>
<dbReference type="SMR" id="Q04UL2"/>
<dbReference type="KEGG" id="lbj:LBJ_0737"/>
<dbReference type="HOGENOM" id="CLU_012689_0_0_12"/>
<dbReference type="UniPathway" id="UPA00056">
    <property type="reaction ID" value="UER00096"/>
</dbReference>
<dbReference type="Proteomes" id="UP000000656">
    <property type="component" value="Chromosome 1"/>
</dbReference>
<dbReference type="GO" id="GO:0051539">
    <property type="term" value="F:4 iron, 4 sulfur cluster binding"/>
    <property type="evidence" value="ECO:0007669"/>
    <property type="project" value="UniProtKB-UniRule"/>
</dbReference>
<dbReference type="GO" id="GO:0046429">
    <property type="term" value="F:4-hydroxy-3-methylbut-2-en-1-yl diphosphate synthase activity (ferredoxin)"/>
    <property type="evidence" value="ECO:0007669"/>
    <property type="project" value="UniProtKB-UniRule"/>
</dbReference>
<dbReference type="GO" id="GO:0141197">
    <property type="term" value="F:4-hydroxy-3-methylbut-2-enyl-diphosphate synthase activity (flavodoxin)"/>
    <property type="evidence" value="ECO:0007669"/>
    <property type="project" value="UniProtKB-EC"/>
</dbReference>
<dbReference type="GO" id="GO:0005506">
    <property type="term" value="F:iron ion binding"/>
    <property type="evidence" value="ECO:0007669"/>
    <property type="project" value="InterPro"/>
</dbReference>
<dbReference type="GO" id="GO:0019288">
    <property type="term" value="P:isopentenyl diphosphate biosynthetic process, methylerythritol 4-phosphate pathway"/>
    <property type="evidence" value="ECO:0007669"/>
    <property type="project" value="UniProtKB-UniRule"/>
</dbReference>
<dbReference type="GO" id="GO:0016114">
    <property type="term" value="P:terpenoid biosynthetic process"/>
    <property type="evidence" value="ECO:0007669"/>
    <property type="project" value="InterPro"/>
</dbReference>
<dbReference type="FunFam" id="3.20.20.20:FF:000005">
    <property type="entry name" value="4-hydroxy-3-methylbut-2-en-1-yl diphosphate synthase (flavodoxin)"/>
    <property type="match status" value="1"/>
</dbReference>
<dbReference type="FunFam" id="3.30.413.10:FF:000006">
    <property type="entry name" value="4-hydroxy-3-methylbut-2-en-1-yl diphosphate synthase (flavodoxin)"/>
    <property type="match status" value="1"/>
</dbReference>
<dbReference type="Gene3D" id="3.20.20.20">
    <property type="entry name" value="Dihydropteroate synthase-like"/>
    <property type="match status" value="2"/>
</dbReference>
<dbReference type="Gene3D" id="3.30.413.10">
    <property type="entry name" value="Sulfite Reductase Hemoprotein, domain 1"/>
    <property type="match status" value="1"/>
</dbReference>
<dbReference type="HAMAP" id="MF_00159">
    <property type="entry name" value="IspG"/>
    <property type="match status" value="1"/>
</dbReference>
<dbReference type="InterPro" id="IPR011005">
    <property type="entry name" value="Dihydropteroate_synth-like_sf"/>
</dbReference>
<dbReference type="InterPro" id="IPR017178">
    <property type="entry name" value="IspG_atypical"/>
</dbReference>
<dbReference type="InterPro" id="IPR004588">
    <property type="entry name" value="IspG_bac-typ"/>
</dbReference>
<dbReference type="InterPro" id="IPR045854">
    <property type="entry name" value="NO2/SO3_Rdtase_4Fe4S_sf"/>
</dbReference>
<dbReference type="NCBIfam" id="TIGR00612">
    <property type="entry name" value="ispG_gcpE"/>
    <property type="match status" value="1"/>
</dbReference>
<dbReference type="PANTHER" id="PTHR30454">
    <property type="entry name" value="4-HYDROXY-3-METHYLBUT-2-EN-1-YL DIPHOSPHATE SYNTHASE"/>
    <property type="match status" value="1"/>
</dbReference>
<dbReference type="PANTHER" id="PTHR30454:SF0">
    <property type="entry name" value="4-HYDROXY-3-METHYLBUT-2-EN-1-YL DIPHOSPHATE SYNTHASE (FERREDOXIN), CHLOROPLASTIC"/>
    <property type="match status" value="1"/>
</dbReference>
<dbReference type="Pfam" id="PF04551">
    <property type="entry name" value="GcpE"/>
    <property type="match status" value="2"/>
</dbReference>
<dbReference type="PIRSF" id="PIRSF037336">
    <property type="entry name" value="IspG_like"/>
    <property type="match status" value="1"/>
</dbReference>
<dbReference type="SUPFAM" id="SSF56014">
    <property type="entry name" value="Nitrite and sulphite reductase 4Fe-4S domain-like"/>
    <property type="match status" value="1"/>
</dbReference>
<feature type="chain" id="PRO_1000011479" description="4-hydroxy-3-methylbut-2-en-1-yl diphosphate synthase (flavodoxin)">
    <location>
        <begin position="1"/>
        <end position="663"/>
    </location>
</feature>
<feature type="binding site" evidence="1">
    <location>
        <position position="568"/>
    </location>
    <ligand>
        <name>[4Fe-4S] cluster</name>
        <dbReference type="ChEBI" id="CHEBI:49883"/>
    </ligand>
</feature>
<feature type="binding site" evidence="1">
    <location>
        <position position="571"/>
    </location>
    <ligand>
        <name>[4Fe-4S] cluster</name>
        <dbReference type="ChEBI" id="CHEBI:49883"/>
    </ligand>
</feature>
<feature type="binding site" evidence="1">
    <location>
        <position position="602"/>
    </location>
    <ligand>
        <name>[4Fe-4S] cluster</name>
        <dbReference type="ChEBI" id="CHEBI:49883"/>
    </ligand>
</feature>
<feature type="binding site" evidence="1">
    <location>
        <position position="609"/>
    </location>
    <ligand>
        <name>[4Fe-4S] cluster</name>
        <dbReference type="ChEBI" id="CHEBI:49883"/>
    </ligand>
</feature>